<organismHost>
    <name type="scientific">Homo sapiens</name>
    <name type="common">Human</name>
    <dbReference type="NCBI Taxonomy" id="9606"/>
</organismHost>
<organismHost>
    <name type="scientific">Sus scrofa</name>
    <name type="common">Pig</name>
    <dbReference type="NCBI Taxonomy" id="9823"/>
</organismHost>
<protein>
    <recommendedName>
        <fullName evidence="1">Nucleoprotein</fullName>
    </recommendedName>
    <alternativeName>
        <fullName evidence="1">Nucleocapsid protein</fullName>
        <shortName evidence="1">Protein N</shortName>
    </alternativeName>
</protein>
<evidence type="ECO:0000255" key="1">
    <source>
        <dbReference type="HAMAP-Rule" id="MF_04070"/>
    </source>
</evidence>
<evidence type="ECO:0000256" key="2">
    <source>
        <dbReference type="SAM" id="MobiDB-lite"/>
    </source>
</evidence>
<proteinExistence type="inferred from homology"/>
<name>NCAP_INCAA</name>
<gene>
    <name evidence="1" type="primary">NP</name>
</gene>
<reference key="1">
    <citation type="journal article" date="2004" name="J. Gen. Virol.">
        <title>Identification of an amino acid residue on influenza C virus M1 protein responsible for formation of the cord-like structures of the virus.</title>
        <authorList>
            <person name="Muraki Y."/>
            <person name="Washioka H."/>
            <person name="Sugawara K."/>
            <person name="Matsuzaki Y."/>
            <person name="Takashita E."/>
            <person name="Hongo S."/>
        </authorList>
    </citation>
    <scope>NUCLEOTIDE SEQUENCE [GENOMIC RNA]</scope>
</reference>
<accession>Q6I7C0</accession>
<feature type="chain" id="PRO_0000269456" description="Nucleoprotein">
    <location>
        <begin position="1"/>
        <end position="565"/>
    </location>
</feature>
<feature type="region of interest" description="Disordered" evidence="2">
    <location>
        <begin position="520"/>
        <end position="565"/>
    </location>
</feature>
<feature type="compositionally biased region" description="Polar residues" evidence="2">
    <location>
        <begin position="553"/>
        <end position="565"/>
    </location>
</feature>
<sequence>MSDRRQNRKTPDEQRKANALIINENIEAYIAICKEVGLNGDEMLILENGIAIEKAIRICCDGKYQEKREKKAREAQRADSNFNADSIGIRLVKRAGSGTNITYHAVVELTSRSRIVQILKSHWGNELNRAKIAGKRLGFSALFASNLEAIIYQRGRNAARRNGSAELFTLTQGAGIETRYKWIMEKHIGIGVLIADAKGLINGKREGKRGVDANVKLRAGTTGSPLERAMQGIEKKAFPGPLRALARRVVKANYNDAREALNVIAEASLLLKPQITNKMTMPWCMWLAARLTLKDEFANFCAYAGRRAFEVFNIAMEKIGICSFQGTIMNDDEIESIEDKAQVLMMACFGLAYEDFSLVSAMVSHPLKLRNRMKIGNFRVGEKVSTVLSPLLRFTRWAEFAQRFALQANTSREGAQISNSAVFAVERKITTDVQRVEELLNKVQAHEDEPLQTLYKKVREQISIIGRNKSEIKEFLGSSMYDLNDQEKQNPINFRSGAHPFFFEFDPDYNPIRVKRPKKPIAKRNSNISRLEEEGMDENSEIGQAKKMKPLDQLTSTSSNIPGKN</sequence>
<organism>
    <name type="scientific">Influenza C virus (strain C/Ann Arbor/1/1950)</name>
    <dbReference type="NCBI Taxonomy" id="11553"/>
    <lineage>
        <taxon>Viruses</taxon>
        <taxon>Riboviria</taxon>
        <taxon>Orthornavirae</taxon>
        <taxon>Negarnaviricota</taxon>
        <taxon>Polyploviricotina</taxon>
        <taxon>Insthoviricetes</taxon>
        <taxon>Articulavirales</taxon>
        <taxon>Orthomyxoviridae</taxon>
        <taxon>Gammainfluenzavirus</taxon>
        <taxon>Gammainfluenzavirus influenzae</taxon>
        <taxon>Influenza C virus</taxon>
    </lineage>
</organism>
<comment type="function">
    <text evidence="1">Encapsidates the negative strand viral RNA, protecting it from nucleases. The encapsidated genomic RNA is termed the ribonucleoprotein (RNP) and serves as template for transcription and replication. The RNP needs to be localized in the host nucleus to start an infectious cycle, but is too large to diffuse through the nuclear pore complex. NP comprises at least 2 nuclear localization signals that are responsible for the active RNP import into the nucleus through cellular importin alpha/beta pathway. Later in the infection, nclear export of RNPs are mediated through viral proteins NEP interacting with M1 which binds nucleoproteins. It is possible that nucleoprotein binds directly host exportin-1/XPO1 and plays an active role in RNPs nuclear export. M1 interaction with RNP seems to hide nucleoprotein's nuclear localization signals. Soon after a virion infects a new cell, M1 dissociates from the RNP under acidification of the virion driven by M2 protein. Dissociation of M1 from RNP unmasks nucleoprotein's nuclear localization signals, targeting the RNP to the nucleus.</text>
</comment>
<comment type="subunit">
    <text evidence="1">Homomultimerizes to form the nucleocapsid. May bind host exportin-1/XPO1. Binds to viral genomic RNA. Protein-RNA contacts are mediated by a combination of electrostatic interactions between positively charged residues and the phosphate backbone and planar interactions between aromatic side chains and bases.</text>
</comment>
<comment type="subcellular location">
    <subcellularLocation>
        <location evidence="1">Virion</location>
    </subcellularLocation>
    <subcellularLocation>
        <location evidence="1">Host nucleus</location>
    </subcellularLocation>
</comment>
<comment type="PTM">
    <text evidence="1">Late in virus-infected cells, may be cleaved from a 56-kDa protein to a 53-kDa protein by a cellular caspase. This cleavage might be a marker for the onset of apoptosis in infected cells or have a specific function in virus host interaction.</text>
</comment>
<comment type="similarity">
    <text evidence="1">Belongs to the influenza viruses nucleoprotein family.</text>
</comment>
<dbReference type="EMBL" id="AB126195">
    <property type="protein sequence ID" value="BAD24941.1"/>
    <property type="molecule type" value="Genomic_RNA"/>
</dbReference>
<dbReference type="RefSeq" id="YP_089656.1">
    <property type="nucleotide sequence ID" value="NC_006311.1"/>
</dbReference>
<dbReference type="SMR" id="Q6I7C0"/>
<dbReference type="DNASU" id="3077360"/>
<dbReference type="GeneID" id="3077360"/>
<dbReference type="KEGG" id="vg:3077360"/>
<dbReference type="OrthoDB" id="30672at10239"/>
<dbReference type="Proteomes" id="UP000008286">
    <property type="component" value="Genome"/>
</dbReference>
<dbReference type="GO" id="GO:0019029">
    <property type="term" value="C:helical viral capsid"/>
    <property type="evidence" value="ECO:0007669"/>
    <property type="project" value="UniProtKB-UniRule"/>
</dbReference>
<dbReference type="GO" id="GO:0043657">
    <property type="term" value="C:host cell"/>
    <property type="evidence" value="ECO:0007669"/>
    <property type="project" value="GOC"/>
</dbReference>
<dbReference type="GO" id="GO:0042025">
    <property type="term" value="C:host cell nucleus"/>
    <property type="evidence" value="ECO:0007669"/>
    <property type="project" value="UniProtKB-SubCell"/>
</dbReference>
<dbReference type="GO" id="GO:1990904">
    <property type="term" value="C:ribonucleoprotein complex"/>
    <property type="evidence" value="ECO:0007669"/>
    <property type="project" value="UniProtKB-KW"/>
</dbReference>
<dbReference type="GO" id="GO:0019013">
    <property type="term" value="C:viral nucleocapsid"/>
    <property type="evidence" value="ECO:0007669"/>
    <property type="project" value="UniProtKB-UniRule"/>
</dbReference>
<dbReference type="GO" id="GO:0003723">
    <property type="term" value="F:RNA binding"/>
    <property type="evidence" value="ECO:0007669"/>
    <property type="project" value="UniProtKB-UniRule"/>
</dbReference>
<dbReference type="GO" id="GO:0005198">
    <property type="term" value="F:structural molecule activity"/>
    <property type="evidence" value="ECO:0007669"/>
    <property type="project" value="UniProtKB-UniRule"/>
</dbReference>
<dbReference type="GO" id="GO:0046718">
    <property type="term" value="P:symbiont entry into host cell"/>
    <property type="evidence" value="ECO:0007669"/>
    <property type="project" value="UniProtKB-KW"/>
</dbReference>
<dbReference type="GO" id="GO:0075732">
    <property type="term" value="P:viral penetration into host nucleus"/>
    <property type="evidence" value="ECO:0007669"/>
    <property type="project" value="UniProtKB-UniRule"/>
</dbReference>
<dbReference type="HAMAP" id="MF_04070">
    <property type="entry name" value="INFV_NCAP"/>
    <property type="match status" value="1"/>
</dbReference>
<dbReference type="InterPro" id="IPR002141">
    <property type="entry name" value="Flu_NP"/>
</dbReference>
<dbReference type="Pfam" id="PF00506">
    <property type="entry name" value="Flu_NP"/>
    <property type="match status" value="1"/>
</dbReference>
<dbReference type="SUPFAM" id="SSF161003">
    <property type="entry name" value="flu NP-like"/>
    <property type="match status" value="1"/>
</dbReference>
<keyword id="KW-0167">Capsid protein</keyword>
<keyword id="KW-1139">Helical capsid protein</keyword>
<keyword id="KW-1048">Host nucleus</keyword>
<keyword id="KW-0945">Host-virus interaction</keyword>
<keyword id="KW-1185">Reference proteome</keyword>
<keyword id="KW-0687">Ribonucleoprotein</keyword>
<keyword id="KW-0694">RNA-binding</keyword>
<keyword id="KW-0543">Viral nucleoprotein</keyword>
<keyword id="KW-1163">Viral penetration into host nucleus</keyword>
<keyword id="KW-0946">Virion</keyword>
<keyword id="KW-1160">Virus entry into host cell</keyword>